<reference key="1">
    <citation type="journal article" date="1987" name="FEBS Lett.">
        <title>Identification of the lesion in the stimulatory GTP-binding protein of the uncoupled S49 lymphoma.</title>
        <authorList>
            <person name="Rall T."/>
            <person name="Harris B.A."/>
        </authorList>
    </citation>
    <scope>NUCLEOTIDE SEQUENCE [MRNA] (ISOFORM GNAS-1)</scope>
    <scope>VARIANT PRO-389</scope>
    <source>
        <strain>BALB/cJ</strain>
    </source>
</reference>
<reference key="2">
    <citation type="journal article" date="1986" name="Proc. Natl. Acad. Sci. U.S.A.">
        <title>Inhibitory and stimulatory G proteins of adenylate cyclase: cDNA and amino acid sequences of the alpha chains.</title>
        <authorList>
            <person name="Sullivan K.A."/>
            <person name="Liao Y.-C."/>
            <person name="Alborzi A."/>
            <person name="Beiderman B."/>
            <person name="Chang F.-H."/>
            <person name="Masters S.B."/>
            <person name="Levinson A.D."/>
            <person name="Bourne H.R."/>
        </authorList>
    </citation>
    <scope>NUCLEOTIDE SEQUENCE [MRNA] (ISOFORM GNAS-2)</scope>
</reference>
<reference key="3">
    <citation type="submission" date="1998-11" db="EMBL/GenBank/DDBJ databases">
        <title>Molecular characterization of XL2, a neuroendocrine-specific luminal Golgi-resident protein.</title>
        <authorList>
            <person name="Wang Y.Z."/>
            <person name="Kehlenbach R.H."/>
            <person name="Huttner W.B."/>
        </authorList>
    </citation>
    <scope>NUCLEOTIDE SEQUENCE [MRNA] (ISOFORM GNAS-3)</scope>
    <source>
        <strain>C57BL/6J</strain>
    </source>
</reference>
<reference key="4">
    <citation type="journal article" date="2005" name="Science">
        <title>The transcriptional landscape of the mammalian genome.</title>
        <authorList>
            <person name="Carninci P."/>
            <person name="Kasukawa T."/>
            <person name="Katayama S."/>
            <person name="Gough J."/>
            <person name="Frith M.C."/>
            <person name="Maeda N."/>
            <person name="Oyama R."/>
            <person name="Ravasi T."/>
            <person name="Lenhard B."/>
            <person name="Wells C."/>
            <person name="Kodzius R."/>
            <person name="Shimokawa K."/>
            <person name="Bajic V.B."/>
            <person name="Brenner S.E."/>
            <person name="Batalov S."/>
            <person name="Forrest A.R."/>
            <person name="Zavolan M."/>
            <person name="Davis M.J."/>
            <person name="Wilming L.G."/>
            <person name="Aidinis V."/>
            <person name="Allen J.E."/>
            <person name="Ambesi-Impiombato A."/>
            <person name="Apweiler R."/>
            <person name="Aturaliya R.N."/>
            <person name="Bailey T.L."/>
            <person name="Bansal M."/>
            <person name="Baxter L."/>
            <person name="Beisel K.W."/>
            <person name="Bersano T."/>
            <person name="Bono H."/>
            <person name="Chalk A.M."/>
            <person name="Chiu K.P."/>
            <person name="Choudhary V."/>
            <person name="Christoffels A."/>
            <person name="Clutterbuck D.R."/>
            <person name="Crowe M.L."/>
            <person name="Dalla E."/>
            <person name="Dalrymple B.P."/>
            <person name="de Bono B."/>
            <person name="Della Gatta G."/>
            <person name="di Bernardo D."/>
            <person name="Down T."/>
            <person name="Engstrom P."/>
            <person name="Fagiolini M."/>
            <person name="Faulkner G."/>
            <person name="Fletcher C.F."/>
            <person name="Fukushima T."/>
            <person name="Furuno M."/>
            <person name="Futaki S."/>
            <person name="Gariboldi M."/>
            <person name="Georgii-Hemming P."/>
            <person name="Gingeras T.R."/>
            <person name="Gojobori T."/>
            <person name="Green R.E."/>
            <person name="Gustincich S."/>
            <person name="Harbers M."/>
            <person name="Hayashi Y."/>
            <person name="Hensch T.K."/>
            <person name="Hirokawa N."/>
            <person name="Hill D."/>
            <person name="Huminiecki L."/>
            <person name="Iacono M."/>
            <person name="Ikeo K."/>
            <person name="Iwama A."/>
            <person name="Ishikawa T."/>
            <person name="Jakt M."/>
            <person name="Kanapin A."/>
            <person name="Katoh M."/>
            <person name="Kawasawa Y."/>
            <person name="Kelso J."/>
            <person name="Kitamura H."/>
            <person name="Kitano H."/>
            <person name="Kollias G."/>
            <person name="Krishnan S.P."/>
            <person name="Kruger A."/>
            <person name="Kummerfeld S.K."/>
            <person name="Kurochkin I.V."/>
            <person name="Lareau L.F."/>
            <person name="Lazarevic D."/>
            <person name="Lipovich L."/>
            <person name="Liu J."/>
            <person name="Liuni S."/>
            <person name="McWilliam S."/>
            <person name="Madan Babu M."/>
            <person name="Madera M."/>
            <person name="Marchionni L."/>
            <person name="Matsuda H."/>
            <person name="Matsuzawa S."/>
            <person name="Miki H."/>
            <person name="Mignone F."/>
            <person name="Miyake S."/>
            <person name="Morris K."/>
            <person name="Mottagui-Tabar S."/>
            <person name="Mulder N."/>
            <person name="Nakano N."/>
            <person name="Nakauchi H."/>
            <person name="Ng P."/>
            <person name="Nilsson R."/>
            <person name="Nishiguchi S."/>
            <person name="Nishikawa S."/>
            <person name="Nori F."/>
            <person name="Ohara O."/>
            <person name="Okazaki Y."/>
            <person name="Orlando V."/>
            <person name="Pang K.C."/>
            <person name="Pavan W.J."/>
            <person name="Pavesi G."/>
            <person name="Pesole G."/>
            <person name="Petrovsky N."/>
            <person name="Piazza S."/>
            <person name="Reed J."/>
            <person name="Reid J.F."/>
            <person name="Ring B.Z."/>
            <person name="Ringwald M."/>
            <person name="Rost B."/>
            <person name="Ruan Y."/>
            <person name="Salzberg S.L."/>
            <person name="Sandelin A."/>
            <person name="Schneider C."/>
            <person name="Schoenbach C."/>
            <person name="Sekiguchi K."/>
            <person name="Semple C.A."/>
            <person name="Seno S."/>
            <person name="Sessa L."/>
            <person name="Sheng Y."/>
            <person name="Shibata Y."/>
            <person name="Shimada H."/>
            <person name="Shimada K."/>
            <person name="Silva D."/>
            <person name="Sinclair B."/>
            <person name="Sperling S."/>
            <person name="Stupka E."/>
            <person name="Sugiura K."/>
            <person name="Sultana R."/>
            <person name="Takenaka Y."/>
            <person name="Taki K."/>
            <person name="Tammoja K."/>
            <person name="Tan S.L."/>
            <person name="Tang S."/>
            <person name="Taylor M.S."/>
            <person name="Tegner J."/>
            <person name="Teichmann S.A."/>
            <person name="Ueda H.R."/>
            <person name="van Nimwegen E."/>
            <person name="Verardo R."/>
            <person name="Wei C.L."/>
            <person name="Yagi K."/>
            <person name="Yamanishi H."/>
            <person name="Zabarovsky E."/>
            <person name="Zhu S."/>
            <person name="Zimmer A."/>
            <person name="Hide W."/>
            <person name="Bult C."/>
            <person name="Grimmond S.M."/>
            <person name="Teasdale R.D."/>
            <person name="Liu E.T."/>
            <person name="Brusic V."/>
            <person name="Quackenbush J."/>
            <person name="Wahlestedt C."/>
            <person name="Mattick J.S."/>
            <person name="Hume D.A."/>
            <person name="Kai C."/>
            <person name="Sasaki D."/>
            <person name="Tomaru Y."/>
            <person name="Fukuda S."/>
            <person name="Kanamori-Katayama M."/>
            <person name="Suzuki M."/>
            <person name="Aoki J."/>
            <person name="Arakawa T."/>
            <person name="Iida J."/>
            <person name="Imamura K."/>
            <person name="Itoh M."/>
            <person name="Kato T."/>
            <person name="Kawaji H."/>
            <person name="Kawagashira N."/>
            <person name="Kawashima T."/>
            <person name="Kojima M."/>
            <person name="Kondo S."/>
            <person name="Konno H."/>
            <person name="Nakano K."/>
            <person name="Ninomiya N."/>
            <person name="Nishio T."/>
            <person name="Okada M."/>
            <person name="Plessy C."/>
            <person name="Shibata K."/>
            <person name="Shiraki T."/>
            <person name="Suzuki S."/>
            <person name="Tagami M."/>
            <person name="Waki K."/>
            <person name="Watahiki A."/>
            <person name="Okamura-Oho Y."/>
            <person name="Suzuki H."/>
            <person name="Kawai J."/>
            <person name="Hayashizaki Y."/>
        </authorList>
    </citation>
    <scope>NUCLEOTIDE SEQUENCE [LARGE SCALE MRNA] (ISOFORMS GNAS-1 AND GNAS-2)</scope>
    <source>
        <strain>C57BL/6J</strain>
        <tissue>Stomach</tissue>
    </source>
</reference>
<reference key="5">
    <citation type="journal article" date="2009" name="PLoS Biol.">
        <title>Lineage-specific biology revealed by a finished genome assembly of the mouse.</title>
        <authorList>
            <person name="Church D.M."/>
            <person name="Goodstadt L."/>
            <person name="Hillier L.W."/>
            <person name="Zody M.C."/>
            <person name="Goldstein S."/>
            <person name="She X."/>
            <person name="Bult C.J."/>
            <person name="Agarwala R."/>
            <person name="Cherry J.L."/>
            <person name="DiCuccio M."/>
            <person name="Hlavina W."/>
            <person name="Kapustin Y."/>
            <person name="Meric P."/>
            <person name="Maglott D."/>
            <person name="Birtle Z."/>
            <person name="Marques A.C."/>
            <person name="Graves T."/>
            <person name="Zhou S."/>
            <person name="Teague B."/>
            <person name="Potamousis K."/>
            <person name="Churas C."/>
            <person name="Place M."/>
            <person name="Herschleb J."/>
            <person name="Runnheim R."/>
            <person name="Forrest D."/>
            <person name="Amos-Landgraf J."/>
            <person name="Schwartz D.C."/>
            <person name="Cheng Z."/>
            <person name="Lindblad-Toh K."/>
            <person name="Eichler E.E."/>
            <person name="Ponting C.P."/>
        </authorList>
    </citation>
    <scope>NUCLEOTIDE SEQUENCE [LARGE SCALE GENOMIC DNA]</scope>
    <source>
        <strain>C57BL/6J</strain>
    </source>
</reference>
<reference key="6">
    <citation type="journal article" date="2004" name="Genome Res.">
        <title>The status, quality, and expansion of the NIH full-length cDNA project: the Mammalian Gene Collection (MGC).</title>
        <authorList>
            <consortium name="The MGC Project Team"/>
        </authorList>
    </citation>
    <scope>NUCLEOTIDE SEQUENCE [LARGE SCALE MRNA] (ISOFORMS GNAS-1 AND GNAS-2)</scope>
    <source>
        <strain>129</strain>
        <strain>C57BL/6J</strain>
        <strain>Czech II</strain>
        <strain>FVB/N</strain>
        <tissue>Brain</tissue>
        <tissue>Mammary tumor</tissue>
        <tissue>Salivary gland</tissue>
    </source>
</reference>
<reference key="7">
    <citation type="submission" date="2000-04" db="EMBL/GenBank/DDBJ databases">
        <title>Isolation of full-length cDNA clones from mouse brain cDNA library made by oligo-capping method.</title>
        <authorList>
            <person name="Osada N."/>
            <person name="Kusuda J."/>
            <person name="Tanuma R."/>
            <person name="Ito A."/>
            <person name="Hirata M."/>
            <person name="Sugano S."/>
            <person name="Hashimoto K."/>
        </authorList>
    </citation>
    <scope>NUCLEOTIDE SEQUENCE [LARGE SCALE MRNA] OF 73-394 (ISOFORM GNAS-1)</scope>
    <source>
        <strain>C57BL/6J</strain>
        <tissue>Brain</tissue>
    </source>
</reference>
<reference key="8">
    <citation type="submission" date="2007-04" db="UniProtKB">
        <authorList>
            <person name="Lubec G."/>
            <person name="Kang S.U."/>
        </authorList>
    </citation>
    <scope>PROTEIN SEQUENCE OF 266-274 AND 284-293</scope>
    <scope>IDENTIFICATION BY MASS SPECTROMETRY</scope>
    <source>
        <strain>C57BL/6J</strain>
        <tissue>Brain</tissue>
    </source>
</reference>
<reference key="9">
    <citation type="journal article" date="1993" name="J. Biol. Chem.">
        <title>Palmitoylation is required for signaling functions and membrane attachment of Gq alpha and Gs alpha.</title>
        <authorList>
            <person name="Wedegaertner P.B."/>
            <person name="Chu D.H."/>
            <person name="Wilson P.T."/>
            <person name="Levis M.J."/>
            <person name="Bourne H.R."/>
        </authorList>
    </citation>
    <scope>SUBCELLULAR LOCATION</scope>
    <scope>PALMITOYLATION AT CYS-3</scope>
    <scope>MUTAGENESIS OF CYS-3</scope>
</reference>
<reference key="10">
    <citation type="journal article" date="2010" name="Cell">
        <title>A tissue-specific atlas of mouse protein phosphorylation and expression.</title>
        <authorList>
            <person name="Huttlin E.L."/>
            <person name="Jedrychowski M.P."/>
            <person name="Elias J.E."/>
            <person name="Goswami T."/>
            <person name="Rad R."/>
            <person name="Beausoleil S.A."/>
            <person name="Villen J."/>
            <person name="Haas W."/>
            <person name="Sowa M.E."/>
            <person name="Gygi S.P."/>
        </authorList>
    </citation>
    <scope>IDENTIFICATION BY MASS SPECTROMETRY [LARGE SCALE ANALYSIS]</scope>
    <source>
        <tissue>Brain</tissue>
        <tissue>Brown adipose tissue</tissue>
        <tissue>Heart</tissue>
        <tissue>Kidney</tissue>
        <tissue>Liver</tissue>
        <tissue>Lung</tissue>
        <tissue>Pancreas</tissue>
        <tissue>Spleen</tissue>
        <tissue>Testis</tissue>
    </source>
</reference>
<reference key="11">
    <citation type="journal article" date="2011" name="J. Biol. Chem.">
        <title>Ric-8B is a GTP-dependent G protein alphas guanine nucleotide exchange factor.</title>
        <authorList>
            <person name="Chan P."/>
            <person name="Gabay M."/>
            <person name="Wright F.A."/>
            <person name="Tall G.G."/>
        </authorList>
    </citation>
    <scope>FUNCTION</scope>
    <scope>CATALYTIC ACTIVITY</scope>
    <scope>INTERACTION WITH RIC8B</scope>
</reference>
<reference key="12">
    <citation type="journal article" date="2013" name="Biochim. Biophys. Acta">
        <title>A novel Galphas-binding protein, Gas-2 like 2, facilitates the signaling of the A2A adenosine receptor.</title>
        <authorList>
            <person name="Wu Y.C."/>
            <person name="Lai H.L."/>
            <person name="Chang W.C."/>
            <person name="Lin J.T."/>
            <person name="Liu Y.J."/>
            <person name="Chern Y."/>
        </authorList>
    </citation>
    <scope>INTERACTION WITH GAS2L2</scope>
</reference>
<sequence length="394" mass="45664">MGCLGNSKTEDQRNEEKAQREANKKIEKQLQKDKQVYRATHRLLLLGAGESGKSTIVKQMRILHVNGFNGEGGEEDPQAARSNSDGEKATKVQDIKNNLKEAIETIVAAMSNLVPPVELANPENQFRVDYILSVMNVPNFDFPPEFYEHAKALWEDEGVRACYERSNEYQLIDCAQYFLDKIDVIKQADYVPSDQDLLRCRVLTSGIFETKFQVDKVNFHMFDVGGQRDERRKWIQCFNDVTAIIFVVASSSYNMVIREDNQTNRLQEALNLFKSIWNNRWLRTISVILFLNKQDLLAEKVLAGKSKIEDYFPEFARYTTPEDATPEPGEDPRVTRAKYFIRDEFLRISTASGDGRHYCYPHFTCAVDTENIRRVFNDCRDIIQRMHLRQYELL</sequence>
<name>GNAS2_MOUSE</name>
<evidence type="ECO:0000250" key="1">
    <source>
        <dbReference type="UniProtKB" id="P04896"/>
    </source>
</evidence>
<evidence type="ECO:0000250" key="2">
    <source>
        <dbReference type="UniProtKB" id="P63092"/>
    </source>
</evidence>
<evidence type="ECO:0000255" key="3">
    <source>
        <dbReference type="PROSITE-ProRule" id="PRU01230"/>
    </source>
</evidence>
<evidence type="ECO:0000256" key="4">
    <source>
        <dbReference type="SAM" id="MobiDB-lite"/>
    </source>
</evidence>
<evidence type="ECO:0000269" key="5">
    <source>
    </source>
</evidence>
<evidence type="ECO:0000269" key="6">
    <source>
    </source>
</evidence>
<evidence type="ECO:0000269" key="7">
    <source>
    </source>
</evidence>
<evidence type="ECO:0000269" key="8">
    <source>
    </source>
</evidence>
<evidence type="ECO:0000303" key="9">
    <source>
    </source>
</evidence>
<evidence type="ECO:0000303" key="10">
    <source>
    </source>
</evidence>
<evidence type="ECO:0000303" key="11">
    <source>
    </source>
</evidence>
<evidence type="ECO:0000303" key="12">
    <source ref="3"/>
</evidence>
<evidence type="ECO:0000305" key="13"/>
<evidence type="ECO:0000305" key="14">
    <source>
    </source>
</evidence>
<accession>P63094</accession>
<accession>A2A611</accession>
<accession>A2A612</accession>
<accession>A2A613</accession>
<accession>P04894</accession>
<accession>P08755</accession>
<accession>Q3KQM5</accession>
<accession>Q3TFV3</accession>
<accession>Q3TWS9</accession>
<accession>Q3UI70</accession>
<accession>Q58E62</accession>
<accession>Q6P7U9</accession>
<accession>Q80ZK6</accession>
<accession>Q8K5E1</accession>
<accession>Q9Z1R7</accession>
<feature type="initiator methionine" description="Removed" evidence="1">
    <location>
        <position position="1"/>
    </location>
</feature>
<feature type="chain" id="PRO_0000203723" description="Guanine nucleotide-binding protein G(s) subunit alpha isoforms short">
    <location>
        <begin position="2"/>
        <end position="394"/>
    </location>
</feature>
<feature type="domain" description="G-alpha" evidence="3">
    <location>
        <begin position="39"/>
        <end position="394"/>
    </location>
</feature>
<feature type="region of interest" description="Disordered" evidence="4">
    <location>
        <begin position="1"/>
        <end position="23"/>
    </location>
</feature>
<feature type="region of interest" description="G1 motif" evidence="3">
    <location>
        <begin position="42"/>
        <end position="55"/>
    </location>
</feature>
<feature type="region of interest" description="Disordered" evidence="4">
    <location>
        <begin position="68"/>
        <end position="90"/>
    </location>
</feature>
<feature type="region of interest" description="G2 motif" evidence="3">
    <location>
        <begin position="196"/>
        <end position="204"/>
    </location>
</feature>
<feature type="region of interest" description="G3 motif" evidence="3">
    <location>
        <begin position="219"/>
        <end position="228"/>
    </location>
</feature>
<feature type="region of interest" description="G4 motif" evidence="3">
    <location>
        <begin position="288"/>
        <end position="295"/>
    </location>
</feature>
<feature type="region of interest" description="G5 motif" evidence="3">
    <location>
        <begin position="364"/>
        <end position="369"/>
    </location>
</feature>
<feature type="compositionally biased region" description="Basic and acidic residues" evidence="4">
    <location>
        <begin position="8"/>
        <end position="23"/>
    </location>
</feature>
<feature type="binding site" evidence="1">
    <location>
        <begin position="47"/>
        <end position="55"/>
    </location>
    <ligand>
        <name>GTP</name>
        <dbReference type="ChEBI" id="CHEBI:37565"/>
    </ligand>
</feature>
<feature type="binding site" evidence="1">
    <location>
        <position position="54"/>
    </location>
    <ligand>
        <name>Mg(2+)</name>
        <dbReference type="ChEBI" id="CHEBI:18420"/>
    </ligand>
</feature>
<feature type="binding site" evidence="1">
    <location>
        <begin position="197"/>
        <end position="204"/>
    </location>
    <ligand>
        <name>GTP</name>
        <dbReference type="ChEBI" id="CHEBI:37565"/>
    </ligand>
</feature>
<feature type="binding site" evidence="1">
    <location>
        <position position="204"/>
    </location>
    <ligand>
        <name>Mg(2+)</name>
        <dbReference type="ChEBI" id="CHEBI:18420"/>
    </ligand>
</feature>
<feature type="binding site" evidence="1">
    <location>
        <begin position="223"/>
        <end position="227"/>
    </location>
    <ligand>
        <name>GTP</name>
        <dbReference type="ChEBI" id="CHEBI:37565"/>
    </ligand>
</feature>
<feature type="binding site" evidence="1">
    <location>
        <begin position="292"/>
        <end position="295"/>
    </location>
    <ligand>
        <name>GTP</name>
        <dbReference type="ChEBI" id="CHEBI:37565"/>
    </ligand>
</feature>
<feature type="binding site" evidence="1">
    <location>
        <position position="366"/>
    </location>
    <ligand>
        <name>GTP</name>
        <dbReference type="ChEBI" id="CHEBI:37565"/>
    </ligand>
</feature>
<feature type="modified residue" description="Phosphoserine" evidence="2">
    <location>
        <position position="352"/>
    </location>
</feature>
<feature type="lipid moiety-binding region" description="N-palmitoyl glycine" evidence="1">
    <location>
        <position position="2"/>
    </location>
</feature>
<feature type="lipid moiety-binding region" description="S-palmitoyl cysteine" evidence="8">
    <location>
        <position position="3"/>
    </location>
</feature>
<feature type="cross-link" description="Glycyl lysine isopeptide (Lys-Gly) (interchain with G-Cter in ubiquitin)" evidence="2">
    <location>
        <position position="300"/>
    </location>
</feature>
<feature type="splice variant" id="VSP_021153" description="In isoform Gnas-3." evidence="12">
    <original>MGCLGNSKTEDQRNEEKAQREANKKIEKQLQKDKQVYRATHRLLLL</original>
    <variation>MGDSVQILLVFMDK</variation>
    <location>
        <begin position="1"/>
        <end position="46"/>
    </location>
</feature>
<feature type="splice variant" id="VSP_011567" description="In isoform Gnas-2." evidence="9 10 11">
    <original>EGGEEDPQAARSNSDG</original>
    <variation>DS</variation>
    <location>
        <begin position="71"/>
        <end position="86"/>
    </location>
</feature>
<feature type="sequence variant" description="In unc mutant; uncouples receptors from adenylyl cyclases." evidence="7">
    <original>R</original>
    <variation>P</variation>
    <location>
        <position position="389"/>
    </location>
</feature>
<feature type="mutagenesis site" description="Abolishes S-palmitoylation." evidence="8">
    <original>C</original>
    <variation>S</variation>
    <location>
        <position position="3"/>
    </location>
</feature>
<feature type="sequence conflict" description="In Ref. 2; AAA37745." evidence="13" ref="2">
    <original>MGCLGNSKTEDQRNE</original>
    <variation>MAARGAAGLRGGG</variation>
    <location>
        <begin position="1"/>
        <end position="15"/>
    </location>
</feature>
<feature type="sequence conflict" description="In Ref. 4; BAE35187." evidence="13" ref="4">
    <original>H</original>
    <variation>L</variation>
    <location>
        <position position="64"/>
    </location>
</feature>
<feature type="sequence conflict" description="In Ref. 4; BAE35187." evidence="13" ref="4">
    <original>N</original>
    <variation>H</variation>
    <location>
        <position position="97"/>
    </location>
</feature>
<feature type="sequence conflict" description="In Ref. 6; AAI06134." evidence="13" ref="6">
    <original>Y</original>
    <variation>C</variation>
    <location>
        <position position="130"/>
    </location>
</feature>
<feature type="sequence conflict" description="In Ref. 2; AAA37745 and 3; AAD11807." evidence="13" ref="2 3">
    <original>V</original>
    <variation>L</variation>
    <location>
        <position position="137"/>
    </location>
</feature>
<feature type="sequence conflict" description="In Ref. 1; CAA68695." evidence="13" ref="1">
    <original>N</original>
    <variation>D</variation>
    <location>
        <position position="139"/>
    </location>
</feature>
<feature type="sequence conflict" description="In Ref. 7; BAB93551." evidence="13" ref="7">
    <original>R</original>
    <variation>P</variation>
    <location>
        <position position="160"/>
    </location>
</feature>
<feature type="sequence conflict" description="In Ref. 4; BAE40795 and 6; AAI06134." evidence="13" ref="4 6">
    <original>P</original>
    <variation>L</variation>
    <location>
        <position position="326"/>
    </location>
</feature>
<dbReference type="EC" id="3.6.5.-" evidence="5"/>
<dbReference type="EMBL" id="Y00703">
    <property type="protein sequence ID" value="CAA68695.1"/>
    <property type="molecule type" value="mRNA"/>
</dbReference>
<dbReference type="EMBL" id="M13964">
    <property type="protein sequence ID" value="AAA37745.1"/>
    <property type="molecule type" value="mRNA"/>
</dbReference>
<dbReference type="EMBL" id="AF107848">
    <property type="protein sequence ID" value="AAD11807.1"/>
    <property type="molecule type" value="mRNA"/>
</dbReference>
<dbReference type="EMBL" id="AK147051">
    <property type="protein sequence ID" value="BAE27636.1"/>
    <property type="molecule type" value="mRNA"/>
</dbReference>
<dbReference type="EMBL" id="AK159563">
    <property type="protein sequence ID" value="BAE35187.1"/>
    <property type="molecule type" value="mRNA"/>
</dbReference>
<dbReference type="EMBL" id="AK168996">
    <property type="protein sequence ID" value="BAE40795.1"/>
    <property type="molecule type" value="mRNA"/>
</dbReference>
<dbReference type="EMBL" id="AL593857">
    <property type="protein sequence ID" value="CAM24410.1"/>
    <property type="status" value="ALT_SEQ"/>
    <property type="molecule type" value="Genomic_DNA"/>
</dbReference>
<dbReference type="EMBL" id="AL593857">
    <property type="protein sequence ID" value="CAM24411.1"/>
    <property type="molecule type" value="Genomic_DNA"/>
</dbReference>
<dbReference type="EMBL" id="AL593857">
    <property type="protein sequence ID" value="CAM24412.1"/>
    <property type="molecule type" value="Genomic_DNA"/>
</dbReference>
<dbReference type="EMBL" id="BC038067">
    <property type="protein sequence ID" value="AAH38067.1"/>
    <property type="molecule type" value="mRNA"/>
</dbReference>
<dbReference type="EMBL" id="BC048834">
    <property type="protein sequence ID" value="AAH48834.1"/>
    <property type="molecule type" value="mRNA"/>
</dbReference>
<dbReference type="EMBL" id="BC061496">
    <property type="protein sequence ID" value="AAH61496.1"/>
    <property type="molecule type" value="mRNA"/>
</dbReference>
<dbReference type="EMBL" id="BC062654">
    <property type="protein sequence ID" value="AAH62654.1"/>
    <property type="molecule type" value="mRNA"/>
</dbReference>
<dbReference type="EMBL" id="BC080816">
    <property type="protein sequence ID" value="AAH80816.1"/>
    <property type="molecule type" value="mRNA"/>
</dbReference>
<dbReference type="EMBL" id="BC092055">
    <property type="protein sequence ID" value="AAH92055.1"/>
    <property type="molecule type" value="mRNA"/>
</dbReference>
<dbReference type="EMBL" id="BC106133">
    <property type="protein sequence ID" value="AAI06134.1"/>
    <property type="molecule type" value="mRNA"/>
</dbReference>
<dbReference type="EMBL" id="AB041808">
    <property type="protein sequence ID" value="BAB93551.1"/>
    <property type="status" value="ALT_SEQ"/>
    <property type="molecule type" value="mRNA"/>
</dbReference>
<dbReference type="CCDS" id="CCDS38356.1">
    <molecule id="P63094-1"/>
</dbReference>
<dbReference type="CCDS" id="CCDS38357.1">
    <molecule id="P63094-2"/>
</dbReference>
<dbReference type="PIR" id="A25889">
    <property type="entry name" value="RGMSA1"/>
</dbReference>
<dbReference type="PIR" id="S03075">
    <property type="entry name" value="RGMSA2"/>
</dbReference>
<dbReference type="RefSeq" id="NP_001070978.1">
    <molecule id="P63094-2"/>
    <property type="nucleotide sequence ID" value="NM_001077510.5"/>
</dbReference>
<dbReference type="RefSeq" id="NP_001297012.1">
    <molecule id="P63094-1"/>
    <property type="nucleotide sequence ID" value="NM_001310083.1"/>
</dbReference>
<dbReference type="RefSeq" id="NP_963910.1">
    <molecule id="P63094-1"/>
    <property type="nucleotide sequence ID" value="NM_201616.3"/>
</dbReference>
<dbReference type="RefSeq" id="XP_030103428.1">
    <molecule id="P63094-1"/>
    <property type="nucleotide sequence ID" value="XM_030247568.1"/>
</dbReference>
<dbReference type="PDB" id="7XW5">
    <property type="method" value="EM"/>
    <property type="resolution" value="2.96 A"/>
    <property type="chains" value="A=6-394"/>
</dbReference>
<dbReference type="PDBsum" id="7XW5"/>
<dbReference type="EMDB" id="EMD-33491"/>
<dbReference type="SMR" id="P63094"/>
<dbReference type="BioGRID" id="199972">
    <property type="interactions" value="38"/>
</dbReference>
<dbReference type="CORUM" id="P63094"/>
<dbReference type="IntAct" id="P63094">
    <property type="interactions" value="3"/>
</dbReference>
<dbReference type="iPTMnet" id="P63094"/>
<dbReference type="PhosphoSitePlus" id="P63094"/>
<dbReference type="SwissPalm" id="P63094"/>
<dbReference type="jPOST" id="P63094"/>
<dbReference type="PeptideAtlas" id="P63094"/>
<dbReference type="ProteomicsDB" id="267734">
    <molecule id="P63094-1"/>
</dbReference>
<dbReference type="ProteomicsDB" id="267735">
    <molecule id="P63094-2"/>
</dbReference>
<dbReference type="ProteomicsDB" id="267736">
    <molecule id="P63094-3"/>
</dbReference>
<dbReference type="Pumba" id="P63094"/>
<dbReference type="Antibodypedia" id="4152">
    <property type="antibodies" value="800 antibodies from 43 providers"/>
</dbReference>
<dbReference type="DNASU" id="14683"/>
<dbReference type="Ensembl" id="ENSMUST00000087871.11">
    <molecule id="P63094-1"/>
    <property type="protein sequence ID" value="ENSMUSP00000085179.5"/>
    <property type="gene ID" value="ENSMUSG00000027523.21"/>
</dbReference>
<dbReference type="Ensembl" id="ENSMUST00000109085.8">
    <molecule id="P63094-2"/>
    <property type="protein sequence ID" value="ENSMUSP00000104713.2"/>
    <property type="gene ID" value="ENSMUSG00000027523.21"/>
</dbReference>
<dbReference type="Ensembl" id="ENSMUST00000109087.8">
    <molecule id="P63094-1"/>
    <property type="protein sequence ID" value="ENSMUSP00000104715.2"/>
    <property type="gene ID" value="ENSMUSG00000027523.21"/>
</dbReference>
<dbReference type="GeneID" id="14683"/>
<dbReference type="KEGG" id="mmu:14683"/>
<dbReference type="UCSC" id="uc008oey.1">
    <molecule id="P63094-1"/>
    <property type="organism name" value="mouse"/>
</dbReference>
<dbReference type="UCSC" id="uc033hrs.1">
    <molecule id="P63094-2"/>
    <property type="organism name" value="mouse"/>
</dbReference>
<dbReference type="AGR" id="MGI:95777"/>
<dbReference type="CTD" id="2778"/>
<dbReference type="MGI" id="MGI:95777">
    <property type="gene designation" value="Gnas"/>
</dbReference>
<dbReference type="VEuPathDB" id="HostDB:ENSMUSG00000027523"/>
<dbReference type="GeneTree" id="ENSGT00940000156300"/>
<dbReference type="HOGENOM" id="CLU_014184_3_0_1"/>
<dbReference type="OMA" id="DHVAKCW"/>
<dbReference type="OrthoDB" id="9836061at2759"/>
<dbReference type="BioGRID-ORCS" id="14683">
    <property type="hits" value="12 hits in 78 CRISPR screens"/>
</dbReference>
<dbReference type="ChiTaRS" id="Gnas">
    <property type="organism name" value="mouse"/>
</dbReference>
<dbReference type="Proteomes" id="UP000000589">
    <property type="component" value="Chromosome 2"/>
</dbReference>
<dbReference type="Bgee" id="ENSMUSG00000027523">
    <property type="expression patterns" value="Expressed in superior cervical ganglion and 273 other cell types or tissues"/>
</dbReference>
<dbReference type="ExpressionAtlas" id="P63094">
    <property type="expression patterns" value="baseline and differential"/>
</dbReference>
<dbReference type="GO" id="GO:0030425">
    <property type="term" value="C:dendrite"/>
    <property type="evidence" value="ECO:0000314"/>
    <property type="project" value="MGI"/>
</dbReference>
<dbReference type="GO" id="GO:0005834">
    <property type="term" value="C:heterotrimeric G-protein complex"/>
    <property type="evidence" value="ECO:0000266"/>
    <property type="project" value="MGI"/>
</dbReference>
<dbReference type="GO" id="GO:0016020">
    <property type="term" value="C:membrane"/>
    <property type="evidence" value="ECO:0000314"/>
    <property type="project" value="MGI"/>
</dbReference>
<dbReference type="GO" id="GO:0005886">
    <property type="term" value="C:plasma membrane"/>
    <property type="evidence" value="ECO:0000314"/>
    <property type="project" value="MGI"/>
</dbReference>
<dbReference type="GO" id="GO:0010856">
    <property type="term" value="F:adenylate cyclase activator activity"/>
    <property type="evidence" value="ECO:0000314"/>
    <property type="project" value="MGI"/>
</dbReference>
<dbReference type="GO" id="GO:0010854">
    <property type="term" value="F:adenylate cyclase regulator activity"/>
    <property type="evidence" value="ECO:0000315"/>
    <property type="project" value="MGI"/>
</dbReference>
<dbReference type="GO" id="GO:0047391">
    <property type="term" value="F:alkylglycerophosphoethanolamine phosphodiesterase activity"/>
    <property type="evidence" value="ECO:0000266"/>
    <property type="project" value="MGI"/>
</dbReference>
<dbReference type="GO" id="GO:0003925">
    <property type="term" value="F:G protein activity"/>
    <property type="evidence" value="ECO:0000314"/>
    <property type="project" value="UniProtKB"/>
</dbReference>
<dbReference type="GO" id="GO:0031683">
    <property type="term" value="F:G-protein beta/gamma-subunit complex binding"/>
    <property type="evidence" value="ECO:0007669"/>
    <property type="project" value="InterPro"/>
</dbReference>
<dbReference type="GO" id="GO:0005525">
    <property type="term" value="F:GTP binding"/>
    <property type="evidence" value="ECO:0007669"/>
    <property type="project" value="UniProtKB-KW"/>
</dbReference>
<dbReference type="GO" id="GO:0003924">
    <property type="term" value="F:GTPase activity"/>
    <property type="evidence" value="ECO:0000266"/>
    <property type="project" value="MGI"/>
</dbReference>
<dbReference type="GO" id="GO:0046872">
    <property type="term" value="F:metal ion binding"/>
    <property type="evidence" value="ECO:0007669"/>
    <property type="project" value="UniProtKB-KW"/>
</dbReference>
<dbReference type="GO" id="GO:0071880">
    <property type="term" value="P:adenylate cyclase-activating adrenergic receptor signaling pathway"/>
    <property type="evidence" value="ECO:0000250"/>
    <property type="project" value="UniProtKB"/>
</dbReference>
<dbReference type="GO" id="GO:0007191">
    <property type="term" value="P:adenylate cyclase-activating dopamine receptor signaling pathway"/>
    <property type="evidence" value="ECO:0000316"/>
    <property type="project" value="MGI"/>
</dbReference>
<dbReference type="GO" id="GO:0007189">
    <property type="term" value="P:adenylate cyclase-activating G protein-coupled receptor signaling pathway"/>
    <property type="evidence" value="ECO:0000314"/>
    <property type="project" value="MGI"/>
</dbReference>
<dbReference type="GO" id="GO:0051216">
    <property type="term" value="P:cartilage development"/>
    <property type="evidence" value="ECO:0000315"/>
    <property type="project" value="MGI"/>
</dbReference>
<dbReference type="GO" id="GO:0071377">
    <property type="term" value="P:cellular response to glucagon stimulus"/>
    <property type="evidence" value="ECO:0000315"/>
    <property type="project" value="MGI"/>
</dbReference>
<dbReference type="GO" id="GO:0048701">
    <property type="term" value="P:embryonic cranial skeleton morphogenesis"/>
    <property type="evidence" value="ECO:0000315"/>
    <property type="project" value="MGI"/>
</dbReference>
<dbReference type="GO" id="GO:0035116">
    <property type="term" value="P:embryonic hindlimb morphogenesis"/>
    <property type="evidence" value="ECO:0000315"/>
    <property type="project" value="MGI"/>
</dbReference>
<dbReference type="GO" id="GO:0001958">
    <property type="term" value="P:endochondral ossification"/>
    <property type="evidence" value="ECO:0000315"/>
    <property type="project" value="MGI"/>
</dbReference>
<dbReference type="GO" id="GO:0006112">
    <property type="term" value="P:energy reserve metabolic process"/>
    <property type="evidence" value="ECO:0000315"/>
    <property type="project" value="MGI"/>
</dbReference>
<dbReference type="GO" id="GO:0007186">
    <property type="term" value="P:G protein-coupled receptor signaling pathway"/>
    <property type="evidence" value="ECO:0000304"/>
    <property type="project" value="MGI"/>
</dbReference>
<dbReference type="GO" id="GO:0071514">
    <property type="term" value="P:genomic imprinting"/>
    <property type="evidence" value="ECO:0000315"/>
    <property type="project" value="MGI"/>
</dbReference>
<dbReference type="GO" id="GO:0035264">
    <property type="term" value="P:multicellular organism growth"/>
    <property type="evidence" value="ECO:0000315"/>
    <property type="project" value="MGI"/>
</dbReference>
<dbReference type="GO" id="GO:0120162">
    <property type="term" value="P:positive regulation of cold-induced thermogenesis"/>
    <property type="evidence" value="ECO:0000315"/>
    <property type="project" value="YuBioLab"/>
</dbReference>
<dbReference type="GO" id="GO:0032024">
    <property type="term" value="P:positive regulation of insulin secretion"/>
    <property type="evidence" value="ECO:0000314"/>
    <property type="project" value="MGI"/>
</dbReference>
<dbReference type="GO" id="GO:0045669">
    <property type="term" value="P:positive regulation of osteoblast differentiation"/>
    <property type="evidence" value="ECO:0000315"/>
    <property type="project" value="MGI"/>
</dbReference>
<dbReference type="GO" id="GO:0045672">
    <property type="term" value="P:positive regulation of osteoclast differentiation"/>
    <property type="evidence" value="ECO:0000315"/>
    <property type="project" value="MGI"/>
</dbReference>
<dbReference type="GO" id="GO:0040032">
    <property type="term" value="P:post-embryonic body morphogenesis"/>
    <property type="evidence" value="ECO:0000315"/>
    <property type="project" value="MGI"/>
</dbReference>
<dbReference type="GO" id="GO:0009791">
    <property type="term" value="P:post-embryonic development"/>
    <property type="evidence" value="ECO:0000315"/>
    <property type="project" value="MGI"/>
</dbReference>
<dbReference type="GO" id="GO:2000828">
    <property type="term" value="P:regulation of parathyroid hormone secretion"/>
    <property type="evidence" value="ECO:0000315"/>
    <property type="project" value="MGI"/>
</dbReference>
<dbReference type="GO" id="GO:0009410">
    <property type="term" value="P:response to xenobiotic stimulus"/>
    <property type="evidence" value="ECO:0000315"/>
    <property type="project" value="MGI"/>
</dbReference>
<dbReference type="GO" id="GO:0001501">
    <property type="term" value="P:skeletal system development"/>
    <property type="evidence" value="ECO:0000315"/>
    <property type="project" value="MGI"/>
</dbReference>
<dbReference type="GO" id="GO:0043588">
    <property type="term" value="P:skin development"/>
    <property type="evidence" value="ECO:0000315"/>
    <property type="project" value="MGI"/>
</dbReference>
<dbReference type="GO" id="GO:0001894">
    <property type="term" value="P:tissue homeostasis"/>
    <property type="evidence" value="ECO:0000315"/>
    <property type="project" value="MGI"/>
</dbReference>
<dbReference type="CDD" id="cd00066">
    <property type="entry name" value="G-alpha"/>
    <property type="match status" value="1"/>
</dbReference>
<dbReference type="FunFam" id="1.10.400.10:FF:000003">
    <property type="entry name" value="Guanine nucleotide-binding protein G(S) subunit alpha"/>
    <property type="match status" value="1"/>
</dbReference>
<dbReference type="FunFam" id="3.40.50.300:FF:006178">
    <property type="entry name" value="Guanine nucleotide-binding protein G(s) subunit alpha isoforms short"/>
    <property type="match status" value="2"/>
</dbReference>
<dbReference type="Gene3D" id="1.10.400.10">
    <property type="entry name" value="GI Alpha 1, domain 2-like"/>
    <property type="match status" value="1"/>
</dbReference>
<dbReference type="Gene3D" id="3.40.50.300">
    <property type="entry name" value="P-loop containing nucleotide triphosphate hydrolases"/>
    <property type="match status" value="1"/>
</dbReference>
<dbReference type="InterPro" id="IPR000367">
    <property type="entry name" value="Gprotein_alpha_S"/>
</dbReference>
<dbReference type="InterPro" id="IPR001019">
    <property type="entry name" value="Gprotein_alpha_su"/>
</dbReference>
<dbReference type="InterPro" id="IPR011025">
    <property type="entry name" value="GproteinA_insert"/>
</dbReference>
<dbReference type="InterPro" id="IPR027417">
    <property type="entry name" value="P-loop_NTPase"/>
</dbReference>
<dbReference type="PANTHER" id="PTHR10218">
    <property type="entry name" value="GTP-BINDING PROTEIN ALPHA SUBUNIT"/>
    <property type="match status" value="1"/>
</dbReference>
<dbReference type="PANTHER" id="PTHR10218:SF357">
    <property type="entry name" value="GUANINE NUCLEOTIDE-BINDING PROTEIN G(S) SUBUNIT ALPHA"/>
    <property type="match status" value="1"/>
</dbReference>
<dbReference type="Pfam" id="PF00503">
    <property type="entry name" value="G-alpha"/>
    <property type="match status" value="1"/>
</dbReference>
<dbReference type="PRINTS" id="PR00318">
    <property type="entry name" value="GPROTEINA"/>
</dbReference>
<dbReference type="PRINTS" id="PR00443">
    <property type="entry name" value="GPROTEINAS"/>
</dbReference>
<dbReference type="SMART" id="SM00275">
    <property type="entry name" value="G_alpha"/>
    <property type="match status" value="1"/>
</dbReference>
<dbReference type="SUPFAM" id="SSF52540">
    <property type="entry name" value="P-loop containing nucleoside triphosphate hydrolases"/>
    <property type="match status" value="1"/>
</dbReference>
<dbReference type="SUPFAM" id="SSF47895">
    <property type="entry name" value="Transducin (alpha subunit), insertion domain"/>
    <property type="match status" value="1"/>
</dbReference>
<dbReference type="PROSITE" id="PS51882">
    <property type="entry name" value="G_ALPHA"/>
    <property type="match status" value="1"/>
</dbReference>
<organism>
    <name type="scientific">Mus musculus</name>
    <name type="common">Mouse</name>
    <dbReference type="NCBI Taxonomy" id="10090"/>
    <lineage>
        <taxon>Eukaryota</taxon>
        <taxon>Metazoa</taxon>
        <taxon>Chordata</taxon>
        <taxon>Craniata</taxon>
        <taxon>Vertebrata</taxon>
        <taxon>Euteleostomi</taxon>
        <taxon>Mammalia</taxon>
        <taxon>Eutheria</taxon>
        <taxon>Euarchontoglires</taxon>
        <taxon>Glires</taxon>
        <taxon>Rodentia</taxon>
        <taxon>Myomorpha</taxon>
        <taxon>Muroidea</taxon>
        <taxon>Muridae</taxon>
        <taxon>Murinae</taxon>
        <taxon>Mus</taxon>
        <taxon>Mus</taxon>
    </lineage>
</organism>
<gene>
    <name type="primary">Gnas</name>
    <name type="synonym">Gnas1</name>
    <name type="ORF">MNCb-5546</name>
</gene>
<comment type="function">
    <text evidence="2 5">Guanine nucleotide-binding proteins (G proteins) function as transducers in numerous signaling pathways controlled by G protein-coupled receptors (GPCRs) (PubMed:21467038). The alpha chain contains the guanine nucleotide binding site and alternates between an active, GTP-bound state and an inactive, GDP-bound state (PubMed:21467038). Signaling by an activated GPCR promotes GDP release and GTP binding (PubMed:21467038). The alpha subunit has a low GTPase activity that converts bound GTP to GDP, thereby terminating the signal (PubMed:21467038). Both GDP release and GTP hydrolysis are modulated by numerous regulatory proteins (By similarity). Signaling involves the activation of adenylyl cyclases, resulting in increased levels of the signaling molecule cAMP (By similarity). Functions downstream of beta-adrenergic receptors (By similarity). Stimulates the Ras signaling pathway via RAPGEF2 (By similarity).</text>
</comment>
<comment type="catalytic activity">
    <reaction evidence="5">
        <text>GTP + H2O = GDP + phosphate + H(+)</text>
        <dbReference type="Rhea" id="RHEA:19669"/>
        <dbReference type="ChEBI" id="CHEBI:15377"/>
        <dbReference type="ChEBI" id="CHEBI:15378"/>
        <dbReference type="ChEBI" id="CHEBI:37565"/>
        <dbReference type="ChEBI" id="CHEBI:43474"/>
        <dbReference type="ChEBI" id="CHEBI:58189"/>
    </reaction>
    <physiologicalReaction direction="left-to-right" evidence="5">
        <dbReference type="Rhea" id="RHEA:19670"/>
    </physiologicalReaction>
</comment>
<comment type="subunit">
    <text evidence="1 2 5 6">Heterotrimeric G proteins are composed of 3 units; alpha, beta and gamma. The alpha chain contains the guanine nucleotide binding site (By similarity). Component of the TAS2R14-GNAS2 complex, consisting of TAS2R14, GNAS2, GNB1 and GNG2; within the complex interacts with TAS2R14; this complex plays a role in the perception of bitterness (By similarity). Interacts with CRY1; the interaction may block GPCR-mediated regulation of cAMP concentrations. Interacts with ADCY6 and stimulates its adenylyl cyclase activity (By similarity). Interacts with ADCY2 and ADCY5 (By similarity). Interacts (GDP-bound form) with RIC8B; promoting GNAS folding and association with the plasma membrane (PubMed:21467038). Stimulates the ADCY5 adenylyl cyclase activity (By similarity). Interaction with SASH1 (By similarity). Interacts with GASL2L2 (PubMed:23994616).</text>
</comment>
<comment type="subcellular location">
    <subcellularLocation>
        <location evidence="8">Cell membrane</location>
        <topology evidence="8">Lipid-anchor</topology>
    </subcellularLocation>
</comment>
<comment type="alternative products">
    <event type="alternative splicing"/>
    <isoform>
        <id>P63094-1</id>
        <name>Gnas-1</name>
        <sequence type="displayed"/>
    </isoform>
    <isoform>
        <id>P63094-2</id>
        <name>Gnas-2</name>
        <sequence type="described" ref="VSP_011567"/>
    </isoform>
    <isoform>
        <id>P63094-3</id>
        <name>Gnas-3</name>
        <name>NTas</name>
        <sequence type="described" ref="VSP_021153"/>
    </isoform>
    <isoform>
        <id>Q6R0H7-1</id>
        <name>XLas-1</name>
        <name>XXL</name>
        <sequence type="external"/>
    </isoform>
    <isoform>
        <id>Q6R0H7-2</id>
        <name>XLas-2</name>
        <name>XXLb1</name>
        <sequence type="external"/>
    </isoform>
    <isoform>
        <id>Q6R0H7-3</id>
        <name>XLas-3</name>
        <name>XXLb2</name>
        <sequence type="external"/>
    </isoform>
    <isoform>
        <id>Q6R0H7-4</id>
        <name>XLas-4</name>
        <sequence type="external"/>
    </isoform>
    <isoform>
        <id>Q9Z0F1-1</id>
        <name>Nesp55-1</name>
        <sequence type="external"/>
    </isoform>
    <isoform>
        <id>Q9Z0F1-2</id>
        <name>Nesp55-2</name>
        <sequence type="external"/>
    </isoform>
</comment>
<comment type="miscellaneous">
    <text>This protein is produced by a bicistronic gene which also produces the ALEX protein from an overlapping reading frame.</text>
</comment>
<comment type="miscellaneous">
    <text>The GNAS locus is imprinted in a complex manner, giving rise to distinct paternally, maternally and biallelically expressed proteins. The XLas isoforms are paternally derived, the Gnas isoforms are biallelically derived and the Nesp55 isoforms are maternally derived.</text>
</comment>
<comment type="similarity">
    <text evidence="13">Belongs to the G-alpha family. G(s) subfamily.</text>
</comment>
<comment type="caution">
    <text evidence="14">It was found (PubMed:8227063) that in engineered, C3S-mutagenized sequence expressed in HEK293 cells there was no radiolabeling by either S- or N-palmitoylation. This result is incompatible with a prediction for N-palmitoylation unless N-palmitoylation depends on S-palmitoylation occurring first or N-palmitoylation did not occur in the experimental expression system.</text>
</comment>
<comment type="sequence caution" evidence="13">
    <conflict type="miscellaneous discrepancy">
        <sequence resource="EMBL-CDS" id="BAB93551"/>
    </conflict>
</comment>
<comment type="sequence caution" evidence="13">
    <conflict type="erroneous gene model prediction">
        <sequence resource="EMBL-CDS" id="CAM24410"/>
    </conflict>
</comment>
<protein>
    <recommendedName>
        <fullName>Guanine nucleotide-binding protein G(s) subunit alpha isoforms short</fullName>
        <ecNumber evidence="5">3.6.5.-</ecNumber>
    </recommendedName>
    <alternativeName>
        <fullName>Adenylate cyclase-stimulating G alpha protein</fullName>
    </alternativeName>
</protein>
<proteinExistence type="evidence at protein level"/>
<keyword id="KW-0002">3D-structure</keyword>
<keyword id="KW-0025">Alternative splicing</keyword>
<keyword id="KW-1003">Cell membrane</keyword>
<keyword id="KW-0903">Direct protein sequencing</keyword>
<keyword id="KW-0342">GTP-binding</keyword>
<keyword id="KW-0378">Hydrolase</keyword>
<keyword id="KW-1017">Isopeptide bond</keyword>
<keyword id="KW-0449">Lipoprotein</keyword>
<keyword id="KW-0460">Magnesium</keyword>
<keyword id="KW-0472">Membrane</keyword>
<keyword id="KW-0479">Metal-binding</keyword>
<keyword id="KW-0547">Nucleotide-binding</keyword>
<keyword id="KW-0564">Palmitate</keyword>
<keyword id="KW-0597">Phosphoprotein</keyword>
<keyword id="KW-1185">Reference proteome</keyword>
<keyword id="KW-0807">Transducer</keyword>
<keyword id="KW-0832">Ubl conjugation</keyword>